<organism>
    <name type="scientific">Halalkalibacterium halodurans (strain ATCC BAA-125 / DSM 18197 / FERM 7344 / JCM 9153 / C-125)</name>
    <name type="common">Bacillus halodurans</name>
    <dbReference type="NCBI Taxonomy" id="272558"/>
    <lineage>
        <taxon>Bacteria</taxon>
        <taxon>Bacillati</taxon>
        <taxon>Bacillota</taxon>
        <taxon>Bacilli</taxon>
        <taxon>Bacillales</taxon>
        <taxon>Bacillaceae</taxon>
        <taxon>Halalkalibacterium (ex Joshi et al. 2022)</taxon>
    </lineage>
</organism>
<reference key="1">
    <citation type="journal article" date="2000" name="Nucleic Acids Res.">
        <title>Complete genome sequence of the alkaliphilic bacterium Bacillus halodurans and genomic sequence comparison with Bacillus subtilis.</title>
        <authorList>
            <person name="Takami H."/>
            <person name="Nakasone K."/>
            <person name="Takaki Y."/>
            <person name="Maeno G."/>
            <person name="Sasaki R."/>
            <person name="Masui N."/>
            <person name="Fuji F."/>
            <person name="Hirama C."/>
            <person name="Nakamura Y."/>
            <person name="Ogasawara N."/>
            <person name="Kuhara S."/>
            <person name="Horikoshi K."/>
        </authorList>
    </citation>
    <scope>NUCLEOTIDE SEQUENCE [LARGE SCALE GENOMIC DNA]</scope>
    <source>
        <strain>ATCC BAA-125 / DSM 18197 / FERM 7344 / JCM 9153 / C-125</strain>
    </source>
</reference>
<dbReference type="EMBL" id="BA000004">
    <property type="protein sequence ID" value="BAB06132.1"/>
    <property type="molecule type" value="Genomic_DNA"/>
</dbReference>
<dbReference type="PIR" id="E83951">
    <property type="entry name" value="E83951"/>
</dbReference>
<dbReference type="RefSeq" id="WP_010898566.1">
    <property type="nucleotide sequence ID" value="NC_002570.2"/>
</dbReference>
<dbReference type="SMR" id="Q9KA77"/>
<dbReference type="STRING" id="272558.gene:10728311"/>
<dbReference type="KEGG" id="bha:BH2413"/>
<dbReference type="eggNOG" id="COG0532">
    <property type="taxonomic scope" value="Bacteria"/>
</dbReference>
<dbReference type="HOGENOM" id="CLU_006301_5_1_9"/>
<dbReference type="OrthoDB" id="9811804at2"/>
<dbReference type="Proteomes" id="UP000001258">
    <property type="component" value="Chromosome"/>
</dbReference>
<dbReference type="GO" id="GO:0005829">
    <property type="term" value="C:cytosol"/>
    <property type="evidence" value="ECO:0007669"/>
    <property type="project" value="TreeGrafter"/>
</dbReference>
<dbReference type="GO" id="GO:0005525">
    <property type="term" value="F:GTP binding"/>
    <property type="evidence" value="ECO:0007669"/>
    <property type="project" value="UniProtKB-KW"/>
</dbReference>
<dbReference type="GO" id="GO:0003924">
    <property type="term" value="F:GTPase activity"/>
    <property type="evidence" value="ECO:0007669"/>
    <property type="project" value="UniProtKB-UniRule"/>
</dbReference>
<dbReference type="GO" id="GO:0003743">
    <property type="term" value="F:translation initiation factor activity"/>
    <property type="evidence" value="ECO:0007669"/>
    <property type="project" value="UniProtKB-UniRule"/>
</dbReference>
<dbReference type="CDD" id="cd01887">
    <property type="entry name" value="IF2_eIF5B"/>
    <property type="match status" value="1"/>
</dbReference>
<dbReference type="CDD" id="cd03702">
    <property type="entry name" value="IF2_mtIF2_II"/>
    <property type="match status" value="1"/>
</dbReference>
<dbReference type="CDD" id="cd03692">
    <property type="entry name" value="mtIF2_IVc"/>
    <property type="match status" value="1"/>
</dbReference>
<dbReference type="FunFam" id="2.40.30.10:FF:000007">
    <property type="entry name" value="Translation initiation factor IF-2"/>
    <property type="match status" value="1"/>
</dbReference>
<dbReference type="FunFam" id="2.40.30.10:FF:000008">
    <property type="entry name" value="Translation initiation factor IF-2"/>
    <property type="match status" value="1"/>
</dbReference>
<dbReference type="FunFam" id="3.40.50.10050:FF:000001">
    <property type="entry name" value="Translation initiation factor IF-2"/>
    <property type="match status" value="1"/>
</dbReference>
<dbReference type="FunFam" id="3.40.50.300:FF:000019">
    <property type="entry name" value="Translation initiation factor IF-2"/>
    <property type="match status" value="1"/>
</dbReference>
<dbReference type="Gene3D" id="1.10.10.2480">
    <property type="match status" value="1"/>
</dbReference>
<dbReference type="Gene3D" id="3.40.50.300">
    <property type="entry name" value="P-loop containing nucleotide triphosphate hydrolases"/>
    <property type="match status" value="1"/>
</dbReference>
<dbReference type="Gene3D" id="2.40.30.10">
    <property type="entry name" value="Translation factors"/>
    <property type="match status" value="2"/>
</dbReference>
<dbReference type="Gene3D" id="3.40.50.10050">
    <property type="entry name" value="Translation initiation factor IF- 2, domain 3"/>
    <property type="match status" value="1"/>
</dbReference>
<dbReference type="HAMAP" id="MF_00100_B">
    <property type="entry name" value="IF_2_B"/>
    <property type="match status" value="1"/>
</dbReference>
<dbReference type="InterPro" id="IPR053905">
    <property type="entry name" value="EF-G-like_DII"/>
</dbReference>
<dbReference type="InterPro" id="IPR044145">
    <property type="entry name" value="IF2_II"/>
</dbReference>
<dbReference type="InterPro" id="IPR006847">
    <property type="entry name" value="IF2_N"/>
</dbReference>
<dbReference type="InterPro" id="IPR027417">
    <property type="entry name" value="P-loop_NTPase"/>
</dbReference>
<dbReference type="InterPro" id="IPR005225">
    <property type="entry name" value="Small_GTP-bd"/>
</dbReference>
<dbReference type="InterPro" id="IPR000795">
    <property type="entry name" value="T_Tr_GTP-bd_dom"/>
</dbReference>
<dbReference type="InterPro" id="IPR000178">
    <property type="entry name" value="TF_IF2_bacterial-like"/>
</dbReference>
<dbReference type="InterPro" id="IPR015760">
    <property type="entry name" value="TIF_IF2"/>
</dbReference>
<dbReference type="InterPro" id="IPR023115">
    <property type="entry name" value="TIF_IF2_dom3"/>
</dbReference>
<dbReference type="InterPro" id="IPR036925">
    <property type="entry name" value="TIF_IF2_dom3_sf"/>
</dbReference>
<dbReference type="InterPro" id="IPR009000">
    <property type="entry name" value="Transl_B-barrel_sf"/>
</dbReference>
<dbReference type="NCBIfam" id="TIGR00487">
    <property type="entry name" value="IF-2"/>
    <property type="match status" value="1"/>
</dbReference>
<dbReference type="NCBIfam" id="TIGR00231">
    <property type="entry name" value="small_GTP"/>
    <property type="match status" value="1"/>
</dbReference>
<dbReference type="PANTHER" id="PTHR43381:SF5">
    <property type="entry name" value="TR-TYPE G DOMAIN-CONTAINING PROTEIN"/>
    <property type="match status" value="1"/>
</dbReference>
<dbReference type="PANTHER" id="PTHR43381">
    <property type="entry name" value="TRANSLATION INITIATION FACTOR IF-2-RELATED"/>
    <property type="match status" value="1"/>
</dbReference>
<dbReference type="Pfam" id="PF22042">
    <property type="entry name" value="EF-G_D2"/>
    <property type="match status" value="1"/>
</dbReference>
<dbReference type="Pfam" id="PF00009">
    <property type="entry name" value="GTP_EFTU"/>
    <property type="match status" value="1"/>
</dbReference>
<dbReference type="Pfam" id="PF11987">
    <property type="entry name" value="IF-2"/>
    <property type="match status" value="1"/>
</dbReference>
<dbReference type="Pfam" id="PF04760">
    <property type="entry name" value="IF2_N"/>
    <property type="match status" value="2"/>
</dbReference>
<dbReference type="SUPFAM" id="SSF52156">
    <property type="entry name" value="Initiation factor IF2/eIF5b, domain 3"/>
    <property type="match status" value="1"/>
</dbReference>
<dbReference type="SUPFAM" id="SSF52540">
    <property type="entry name" value="P-loop containing nucleoside triphosphate hydrolases"/>
    <property type="match status" value="1"/>
</dbReference>
<dbReference type="SUPFAM" id="SSF50447">
    <property type="entry name" value="Translation proteins"/>
    <property type="match status" value="2"/>
</dbReference>
<dbReference type="PROSITE" id="PS51722">
    <property type="entry name" value="G_TR_2"/>
    <property type="match status" value="1"/>
</dbReference>
<dbReference type="PROSITE" id="PS01176">
    <property type="entry name" value="IF2"/>
    <property type="match status" value="1"/>
</dbReference>
<gene>
    <name evidence="2" type="primary">infB</name>
    <name type="ordered locus">BH2413</name>
</gene>
<name>IF2_HALH5</name>
<comment type="function">
    <text evidence="2">One of the essential components for the initiation of protein synthesis. Protects formylmethionyl-tRNA from spontaneous hydrolysis and promotes its binding to the 30S ribosomal subunits. Also involved in the hydrolysis of GTP during the formation of the 70S ribosomal complex.</text>
</comment>
<comment type="subcellular location">
    <subcellularLocation>
        <location evidence="2">Cytoplasm</location>
    </subcellularLocation>
</comment>
<comment type="similarity">
    <text evidence="2">Belongs to the TRAFAC class translation factor GTPase superfamily. Classic translation factor GTPase family. IF-2 subfamily.</text>
</comment>
<feature type="chain" id="PRO_0000137169" description="Translation initiation factor IF-2">
    <location>
        <begin position="1"/>
        <end position="730"/>
    </location>
</feature>
<feature type="domain" description="tr-type G">
    <location>
        <begin position="231"/>
        <end position="400"/>
    </location>
</feature>
<feature type="region of interest" description="Disordered" evidence="3">
    <location>
        <begin position="48"/>
        <end position="151"/>
    </location>
</feature>
<feature type="region of interest" description="G1" evidence="1">
    <location>
        <begin position="240"/>
        <end position="247"/>
    </location>
</feature>
<feature type="region of interest" description="G2" evidence="1">
    <location>
        <begin position="265"/>
        <end position="269"/>
    </location>
</feature>
<feature type="region of interest" description="G3" evidence="1">
    <location>
        <begin position="286"/>
        <end position="289"/>
    </location>
</feature>
<feature type="region of interest" description="G4" evidence="1">
    <location>
        <begin position="340"/>
        <end position="343"/>
    </location>
</feature>
<feature type="region of interest" description="G5" evidence="1">
    <location>
        <begin position="376"/>
        <end position="378"/>
    </location>
</feature>
<feature type="compositionally biased region" description="Basic and acidic residues" evidence="3">
    <location>
        <begin position="61"/>
        <end position="77"/>
    </location>
</feature>
<feature type="compositionally biased region" description="Basic and acidic residues" evidence="3">
    <location>
        <begin position="89"/>
        <end position="104"/>
    </location>
</feature>
<feature type="compositionally biased region" description="Basic residues" evidence="3">
    <location>
        <begin position="110"/>
        <end position="123"/>
    </location>
</feature>
<feature type="compositionally biased region" description="Basic and acidic residues" evidence="3">
    <location>
        <begin position="137"/>
        <end position="148"/>
    </location>
</feature>
<feature type="binding site" evidence="2">
    <location>
        <begin position="240"/>
        <end position="247"/>
    </location>
    <ligand>
        <name>GTP</name>
        <dbReference type="ChEBI" id="CHEBI:37565"/>
    </ligand>
</feature>
<feature type="binding site" evidence="2">
    <location>
        <begin position="286"/>
        <end position="290"/>
    </location>
    <ligand>
        <name>GTP</name>
        <dbReference type="ChEBI" id="CHEBI:37565"/>
    </ligand>
</feature>
<feature type="binding site" evidence="2">
    <location>
        <begin position="340"/>
        <end position="343"/>
    </location>
    <ligand>
        <name>GTP</name>
        <dbReference type="ChEBI" id="CHEBI:37565"/>
    </ligand>
</feature>
<protein>
    <recommendedName>
        <fullName evidence="2">Translation initiation factor IF-2</fullName>
    </recommendedName>
</protein>
<accession>Q9KA77</accession>
<sequence length="730" mass="79994">MRKMRIYEYAKEKNLSSKEVIEKLKGLNVHVSNHMSVIDEKTITLLEGNGNQKQGGSGKPEQQKKAGEKKPAQDHGQRKPNTAPAKANNQHDRSQGSDQQKGKAQDGGQKPKHKGNKNKKQHQKNNNNKRNQRGRGRQPEMNKAKPLPEKVTFSGSLTVGELAEKLNKEPSELIKKLMFLGVMATINQELDKDSIELICEDYGVEVEEEVIIDETDIESYVVEDDPSLLKERPPVVTIMGHVDHGKTTLLDSIRNTKVTEGEAGGITQHIGAYQVTVEGKKITFLDTPGHAAFTTMRARGAQVTDITILVVAADDGVMPQTKEAISHAKAAGVPIIVAVNKMDKETANPDRVMQELTEYELVPEAWGGETIFVNVSALTGTGIDELLEMVLLVAEVEELKANPDRLARGTVIEAELDKGRGPVATLLVQSGTLKVGDPIVVGSTFGRVRAMVNDEGRRVKAVGPSTPVEITGLNDVPQAGDQFQAFADEKKARSIGEARATRQKEEERAETSKVSLDDLFNQIQQGEVKEINVIIKADVQGSVEAMRGSLEKIDVEGVKINIIHTGVGAITESDIILAAASNAIVIGFNVRPDGGAKRTAEQEKVDIRLHRVIYNAIEEIEAAMKGMLDPEYEEKIIGQVEVRTTFKVSRIGTIAGSYVTEGKIVRDATVRLIRDGVVIYEGSINALKRFKDDVKEVAQGYECGITLENFNDIKEGDIIEAYVMEEIERT</sequence>
<proteinExistence type="inferred from homology"/>
<keyword id="KW-0963">Cytoplasm</keyword>
<keyword id="KW-0342">GTP-binding</keyword>
<keyword id="KW-0396">Initiation factor</keyword>
<keyword id="KW-0547">Nucleotide-binding</keyword>
<keyword id="KW-0648">Protein biosynthesis</keyword>
<keyword id="KW-1185">Reference proteome</keyword>
<evidence type="ECO:0000250" key="1"/>
<evidence type="ECO:0000255" key="2">
    <source>
        <dbReference type="HAMAP-Rule" id="MF_00100"/>
    </source>
</evidence>
<evidence type="ECO:0000256" key="3">
    <source>
        <dbReference type="SAM" id="MobiDB-lite"/>
    </source>
</evidence>